<reference key="1">
    <citation type="submission" date="2006-10" db="EMBL/GenBank/DDBJ databases">
        <authorList>
            <person name="Fleischmann R.D."/>
            <person name="Dodson R.J."/>
            <person name="Haft D.H."/>
            <person name="Merkel J.S."/>
            <person name="Nelson W.C."/>
            <person name="Fraser C.M."/>
        </authorList>
    </citation>
    <scope>NUCLEOTIDE SEQUENCE [LARGE SCALE GENOMIC DNA]</scope>
    <source>
        <strain>ATCC 700084 / mc(2)155</strain>
    </source>
</reference>
<reference key="2">
    <citation type="journal article" date="2007" name="Genome Biol.">
        <title>Interrupted coding sequences in Mycobacterium smegmatis: authentic mutations or sequencing errors?</title>
        <authorList>
            <person name="Deshayes C."/>
            <person name="Perrodou E."/>
            <person name="Gallien S."/>
            <person name="Euphrasie D."/>
            <person name="Schaeffer C."/>
            <person name="Van-Dorsselaer A."/>
            <person name="Poch O."/>
            <person name="Lecompte O."/>
            <person name="Reyrat J.-M."/>
        </authorList>
    </citation>
    <scope>NUCLEOTIDE SEQUENCE [LARGE SCALE GENOMIC DNA]</scope>
    <source>
        <strain>ATCC 700084 / mc(2)155</strain>
    </source>
</reference>
<reference key="3">
    <citation type="journal article" date="2009" name="Genome Res.">
        <title>Ortho-proteogenomics: multiple proteomes investigation through orthology and a new MS-based protocol.</title>
        <authorList>
            <person name="Gallien S."/>
            <person name="Perrodou E."/>
            <person name="Carapito C."/>
            <person name="Deshayes C."/>
            <person name="Reyrat J.-M."/>
            <person name="Van Dorsselaer A."/>
            <person name="Poch O."/>
            <person name="Schaeffer C."/>
            <person name="Lecompte O."/>
        </authorList>
    </citation>
    <scope>NUCLEOTIDE SEQUENCE [LARGE SCALE GENOMIC DNA]</scope>
    <scope>IDENTIFICATION BY MASS SPECTROMETRY [LARGE SCALE ANALYSIS]</scope>
    <source>
        <strain>ATCC 700084 / mc(2)155</strain>
    </source>
</reference>
<comment type="function">
    <text evidence="1">Catalyzes the ATP-dependent amination of UTP to CTP with either L-glutamine or ammonia as the source of nitrogen. Regulates intracellular CTP levels through interactions with the four ribonucleotide triphosphates.</text>
</comment>
<comment type="catalytic activity">
    <reaction evidence="1">
        <text>UTP + L-glutamine + ATP + H2O = CTP + L-glutamate + ADP + phosphate + 2 H(+)</text>
        <dbReference type="Rhea" id="RHEA:26426"/>
        <dbReference type="ChEBI" id="CHEBI:15377"/>
        <dbReference type="ChEBI" id="CHEBI:15378"/>
        <dbReference type="ChEBI" id="CHEBI:29985"/>
        <dbReference type="ChEBI" id="CHEBI:30616"/>
        <dbReference type="ChEBI" id="CHEBI:37563"/>
        <dbReference type="ChEBI" id="CHEBI:43474"/>
        <dbReference type="ChEBI" id="CHEBI:46398"/>
        <dbReference type="ChEBI" id="CHEBI:58359"/>
        <dbReference type="ChEBI" id="CHEBI:456216"/>
        <dbReference type="EC" id="6.3.4.2"/>
    </reaction>
</comment>
<comment type="catalytic activity">
    <reaction evidence="1">
        <text>L-glutamine + H2O = L-glutamate + NH4(+)</text>
        <dbReference type="Rhea" id="RHEA:15889"/>
        <dbReference type="ChEBI" id="CHEBI:15377"/>
        <dbReference type="ChEBI" id="CHEBI:28938"/>
        <dbReference type="ChEBI" id="CHEBI:29985"/>
        <dbReference type="ChEBI" id="CHEBI:58359"/>
    </reaction>
</comment>
<comment type="catalytic activity">
    <reaction evidence="1">
        <text>UTP + NH4(+) + ATP = CTP + ADP + phosphate + 2 H(+)</text>
        <dbReference type="Rhea" id="RHEA:16597"/>
        <dbReference type="ChEBI" id="CHEBI:15378"/>
        <dbReference type="ChEBI" id="CHEBI:28938"/>
        <dbReference type="ChEBI" id="CHEBI:30616"/>
        <dbReference type="ChEBI" id="CHEBI:37563"/>
        <dbReference type="ChEBI" id="CHEBI:43474"/>
        <dbReference type="ChEBI" id="CHEBI:46398"/>
        <dbReference type="ChEBI" id="CHEBI:456216"/>
    </reaction>
</comment>
<comment type="activity regulation">
    <text evidence="1">Allosterically activated by GTP, when glutamine is the substrate; GTP has no effect on the reaction when ammonia is the substrate. The allosteric effector GTP functions by stabilizing the protein conformation that binds the tetrahedral intermediate(s) formed during glutamine hydrolysis. Inhibited by the product CTP, via allosteric rather than competitive inhibition.</text>
</comment>
<comment type="pathway">
    <text evidence="1">Pyrimidine metabolism; CTP biosynthesis via de novo pathway; CTP from UDP: step 2/2.</text>
</comment>
<comment type="subunit">
    <text evidence="1">Homotetramer.</text>
</comment>
<comment type="miscellaneous">
    <text evidence="1">CTPSs have evolved a hybrid strategy for distinguishing between UTP and CTP. The overlapping regions of the product feedback inhibitory and substrate sites recognize a common feature in both compounds, the triphosphate moiety. To differentiate isosteric substrate and product pyrimidine rings, an additional pocket far from the expected kinase/ligase catalytic site, specifically recognizes the cytosine and ribose portions of the product inhibitor.</text>
</comment>
<comment type="similarity">
    <text evidence="1">Belongs to the CTP synthase family.</text>
</comment>
<comment type="sequence caution" evidence="2">
    <conflict type="erroneous initiation">
        <sequence resource="EMBL-CDS" id="AFP40118"/>
    </conflict>
    <text>Extended N-terminus.</text>
</comment>
<name>PYRG_MYCS2</name>
<organism>
    <name type="scientific">Mycolicibacterium smegmatis (strain ATCC 700084 / mc(2)155)</name>
    <name type="common">Mycobacterium smegmatis</name>
    <dbReference type="NCBI Taxonomy" id="246196"/>
    <lineage>
        <taxon>Bacteria</taxon>
        <taxon>Bacillati</taxon>
        <taxon>Actinomycetota</taxon>
        <taxon>Actinomycetes</taxon>
        <taxon>Mycobacteriales</taxon>
        <taxon>Mycobacteriaceae</taxon>
        <taxon>Mycolicibacterium</taxon>
    </lineage>
</organism>
<feature type="chain" id="PRO_1000139496" description="CTP synthase">
    <location>
        <begin position="1"/>
        <end position="590"/>
    </location>
</feature>
<feature type="domain" description="Glutamine amidotransferase type-1" evidence="1">
    <location>
        <begin position="306"/>
        <end position="554"/>
    </location>
</feature>
<feature type="region of interest" description="Amidoligase domain" evidence="1">
    <location>
        <begin position="1"/>
        <end position="281"/>
    </location>
</feature>
<feature type="active site" description="Nucleophile; for glutamine hydrolysis" evidence="1">
    <location>
        <position position="396"/>
    </location>
</feature>
<feature type="active site" evidence="1">
    <location>
        <position position="527"/>
    </location>
</feature>
<feature type="active site" evidence="1">
    <location>
        <position position="529"/>
    </location>
</feature>
<feature type="binding site" evidence="1">
    <location>
        <position position="23"/>
    </location>
    <ligand>
        <name>CTP</name>
        <dbReference type="ChEBI" id="CHEBI:37563"/>
        <note>allosteric inhibitor</note>
    </ligand>
</feature>
<feature type="binding site" evidence="1">
    <location>
        <position position="23"/>
    </location>
    <ligand>
        <name>UTP</name>
        <dbReference type="ChEBI" id="CHEBI:46398"/>
    </ligand>
</feature>
<feature type="binding site" evidence="1">
    <location>
        <begin position="24"/>
        <end position="29"/>
    </location>
    <ligand>
        <name>ATP</name>
        <dbReference type="ChEBI" id="CHEBI:30616"/>
    </ligand>
</feature>
<feature type="binding site" evidence="1">
    <location>
        <position position="81"/>
    </location>
    <ligand>
        <name>ATP</name>
        <dbReference type="ChEBI" id="CHEBI:30616"/>
    </ligand>
</feature>
<feature type="binding site" evidence="1">
    <location>
        <position position="81"/>
    </location>
    <ligand>
        <name>Mg(2+)</name>
        <dbReference type="ChEBI" id="CHEBI:18420"/>
    </ligand>
</feature>
<feature type="binding site" evidence="1">
    <location>
        <position position="155"/>
    </location>
    <ligand>
        <name>Mg(2+)</name>
        <dbReference type="ChEBI" id="CHEBI:18420"/>
    </ligand>
</feature>
<feature type="binding site" evidence="1">
    <location>
        <begin position="162"/>
        <end position="164"/>
    </location>
    <ligand>
        <name>CTP</name>
        <dbReference type="ChEBI" id="CHEBI:37563"/>
        <note>allosteric inhibitor</note>
    </ligand>
</feature>
<feature type="binding site" evidence="1">
    <location>
        <begin position="202"/>
        <end position="207"/>
    </location>
    <ligand>
        <name>CTP</name>
        <dbReference type="ChEBI" id="CHEBI:37563"/>
        <note>allosteric inhibitor</note>
    </ligand>
</feature>
<feature type="binding site" evidence="1">
    <location>
        <begin position="202"/>
        <end position="207"/>
    </location>
    <ligand>
        <name>UTP</name>
        <dbReference type="ChEBI" id="CHEBI:46398"/>
    </ligand>
</feature>
<feature type="binding site" evidence="1">
    <location>
        <position position="238"/>
    </location>
    <ligand>
        <name>CTP</name>
        <dbReference type="ChEBI" id="CHEBI:37563"/>
        <note>allosteric inhibitor</note>
    </ligand>
</feature>
<feature type="binding site" evidence="1">
    <location>
        <position position="238"/>
    </location>
    <ligand>
        <name>UTP</name>
        <dbReference type="ChEBI" id="CHEBI:46398"/>
    </ligand>
</feature>
<feature type="binding site" evidence="1">
    <location>
        <position position="369"/>
    </location>
    <ligand>
        <name>L-glutamine</name>
        <dbReference type="ChEBI" id="CHEBI:58359"/>
    </ligand>
</feature>
<feature type="binding site" evidence="1">
    <location>
        <begin position="397"/>
        <end position="400"/>
    </location>
    <ligand>
        <name>L-glutamine</name>
        <dbReference type="ChEBI" id="CHEBI:58359"/>
    </ligand>
</feature>
<feature type="binding site" evidence="1">
    <location>
        <position position="419"/>
    </location>
    <ligand>
        <name>L-glutamine</name>
        <dbReference type="ChEBI" id="CHEBI:58359"/>
    </ligand>
</feature>
<feature type="binding site" evidence="1">
    <location>
        <position position="480"/>
    </location>
    <ligand>
        <name>L-glutamine</name>
        <dbReference type="ChEBI" id="CHEBI:58359"/>
    </ligand>
</feature>
<gene>
    <name evidence="1" type="primary">pyrG</name>
    <name type="ordered locus">MSMEG_3746</name>
    <name type="ordered locus">MSMEI_3656</name>
</gene>
<accession>A0QYQ7</accession>
<accession>I7FN26</accession>
<keyword id="KW-0067">ATP-binding</keyword>
<keyword id="KW-0315">Glutamine amidotransferase</keyword>
<keyword id="KW-0436">Ligase</keyword>
<keyword id="KW-0460">Magnesium</keyword>
<keyword id="KW-0479">Metal-binding</keyword>
<keyword id="KW-0547">Nucleotide-binding</keyword>
<keyword id="KW-0665">Pyrimidine biosynthesis</keyword>
<keyword id="KW-1185">Reference proteome</keyword>
<protein>
    <recommendedName>
        <fullName evidence="1">CTP synthase</fullName>
        <ecNumber evidence="1">6.3.4.2</ecNumber>
    </recommendedName>
    <alternativeName>
        <fullName evidence="1">Cytidine 5'-triphosphate synthase</fullName>
    </alternativeName>
    <alternativeName>
        <fullName evidence="1">Cytidine triphosphate synthetase</fullName>
        <shortName evidence="1">CTP synthetase</shortName>
        <shortName evidence="1">CTPS</shortName>
    </alternativeName>
    <alternativeName>
        <fullName evidence="1">UTP--ammonia ligase</fullName>
    </alternativeName>
</protein>
<evidence type="ECO:0000255" key="1">
    <source>
        <dbReference type="HAMAP-Rule" id="MF_01227"/>
    </source>
</evidence>
<evidence type="ECO:0000305" key="2"/>
<sequence>MPALRKHPQTATKHLFVTGGVVSSLGKGLTASSLGQLLTARGLQVTMQKLDPYLNVDPGTMNPFQHGEVFVTEDGAETDLDVGHYERFLDRNLSGSANVTTGQVYSSVIAKERRGEYLGDTVQVIPHITDEIKSRILAMAEPDAAGVRPDVVITEVGGTVGDIESLPFLEAARQVRHEVGRENCFFLHVSLVPYLAPSGELKTKPTQHSVAALRSIGITPDALILRCDRDVPEPLKNKIALMCDVDVDGVISTPDAPSIYDIPKVLHREELDAYVVRRLNLPFRDVDWTEWDDLLRRVHEPQETVRIALVGKYIDLSDAYLSVAEALRAGGFKHRAKVEMRWVASDDCETEHGAAAALSDVHGVLIPGGFGIRGIEGKIGAISYARKRGLPVLGLCLGLQCIVIEAARSVGITEANSAEFDPKTPDPVISTMADQRDAVAGEADLGGTMRLGAYPAVLTPNSVVAQAYQSTEVSERHRHRFEVNNAYRDRIAKSGLRFSGTSPDGHLVEFVEYDPQIHPFLVGTQAHPELKSRPTRPHPLFAAFIGAAIDYKAAERLPGMDLPEQFVPVEHSDADAPALEEPLEKSDVRG</sequence>
<dbReference type="EC" id="6.3.4.2" evidence="1"/>
<dbReference type="EMBL" id="CP000480">
    <property type="protein sequence ID" value="ABK76177.1"/>
    <property type="molecule type" value="Genomic_DNA"/>
</dbReference>
<dbReference type="EMBL" id="CP001663">
    <property type="protein sequence ID" value="AFP40118.1"/>
    <property type="status" value="ALT_INIT"/>
    <property type="molecule type" value="Genomic_DNA"/>
</dbReference>
<dbReference type="RefSeq" id="WP_003895192.1">
    <property type="nucleotide sequence ID" value="NZ_SIJM01000041.1"/>
</dbReference>
<dbReference type="RefSeq" id="YP_888045.1">
    <property type="nucleotide sequence ID" value="NC_008596.1"/>
</dbReference>
<dbReference type="SMR" id="A0QYQ7"/>
<dbReference type="IntAct" id="A0QYQ7">
    <property type="interactions" value="1"/>
</dbReference>
<dbReference type="STRING" id="246196.MSMEG_3746"/>
<dbReference type="PaxDb" id="246196-MSMEI_3656"/>
<dbReference type="KEGG" id="msb:LJ00_18610"/>
<dbReference type="KEGG" id="msg:MSMEI_3656"/>
<dbReference type="KEGG" id="msm:MSMEG_3746"/>
<dbReference type="PATRIC" id="fig|246196.19.peg.3687"/>
<dbReference type="eggNOG" id="COG0504">
    <property type="taxonomic scope" value="Bacteria"/>
</dbReference>
<dbReference type="OrthoDB" id="9801107at2"/>
<dbReference type="UniPathway" id="UPA00159">
    <property type="reaction ID" value="UER00277"/>
</dbReference>
<dbReference type="Proteomes" id="UP000000757">
    <property type="component" value="Chromosome"/>
</dbReference>
<dbReference type="Proteomes" id="UP000006158">
    <property type="component" value="Chromosome"/>
</dbReference>
<dbReference type="GO" id="GO:0005829">
    <property type="term" value="C:cytosol"/>
    <property type="evidence" value="ECO:0007669"/>
    <property type="project" value="TreeGrafter"/>
</dbReference>
<dbReference type="GO" id="GO:0005524">
    <property type="term" value="F:ATP binding"/>
    <property type="evidence" value="ECO:0007669"/>
    <property type="project" value="UniProtKB-KW"/>
</dbReference>
<dbReference type="GO" id="GO:0003883">
    <property type="term" value="F:CTP synthase activity"/>
    <property type="evidence" value="ECO:0007669"/>
    <property type="project" value="UniProtKB-UniRule"/>
</dbReference>
<dbReference type="GO" id="GO:0004359">
    <property type="term" value="F:glutaminase activity"/>
    <property type="evidence" value="ECO:0007669"/>
    <property type="project" value="RHEA"/>
</dbReference>
<dbReference type="GO" id="GO:0042802">
    <property type="term" value="F:identical protein binding"/>
    <property type="evidence" value="ECO:0007669"/>
    <property type="project" value="TreeGrafter"/>
</dbReference>
<dbReference type="GO" id="GO:0046872">
    <property type="term" value="F:metal ion binding"/>
    <property type="evidence" value="ECO:0007669"/>
    <property type="project" value="UniProtKB-KW"/>
</dbReference>
<dbReference type="GO" id="GO:0044210">
    <property type="term" value="P:'de novo' CTP biosynthetic process"/>
    <property type="evidence" value="ECO:0007669"/>
    <property type="project" value="UniProtKB-UniRule"/>
</dbReference>
<dbReference type="GO" id="GO:0019856">
    <property type="term" value="P:pyrimidine nucleobase biosynthetic process"/>
    <property type="evidence" value="ECO:0007669"/>
    <property type="project" value="TreeGrafter"/>
</dbReference>
<dbReference type="CDD" id="cd03113">
    <property type="entry name" value="CTPS_N"/>
    <property type="match status" value="1"/>
</dbReference>
<dbReference type="CDD" id="cd01746">
    <property type="entry name" value="GATase1_CTP_Synthase"/>
    <property type="match status" value="1"/>
</dbReference>
<dbReference type="FunFam" id="3.40.50.300:FF:000009">
    <property type="entry name" value="CTP synthase"/>
    <property type="match status" value="1"/>
</dbReference>
<dbReference type="FunFam" id="3.40.50.880:FF:000002">
    <property type="entry name" value="CTP synthase"/>
    <property type="match status" value="1"/>
</dbReference>
<dbReference type="Gene3D" id="3.40.50.880">
    <property type="match status" value="1"/>
</dbReference>
<dbReference type="Gene3D" id="3.40.50.300">
    <property type="entry name" value="P-loop containing nucleotide triphosphate hydrolases"/>
    <property type="match status" value="1"/>
</dbReference>
<dbReference type="HAMAP" id="MF_01227">
    <property type="entry name" value="PyrG"/>
    <property type="match status" value="1"/>
</dbReference>
<dbReference type="InterPro" id="IPR029062">
    <property type="entry name" value="Class_I_gatase-like"/>
</dbReference>
<dbReference type="InterPro" id="IPR004468">
    <property type="entry name" value="CTP_synthase"/>
</dbReference>
<dbReference type="InterPro" id="IPR017456">
    <property type="entry name" value="CTP_synthase_N"/>
</dbReference>
<dbReference type="InterPro" id="IPR017926">
    <property type="entry name" value="GATASE"/>
</dbReference>
<dbReference type="InterPro" id="IPR033828">
    <property type="entry name" value="GATase1_CTP_Synthase"/>
</dbReference>
<dbReference type="InterPro" id="IPR027417">
    <property type="entry name" value="P-loop_NTPase"/>
</dbReference>
<dbReference type="NCBIfam" id="NF003792">
    <property type="entry name" value="PRK05380.1"/>
    <property type="match status" value="1"/>
</dbReference>
<dbReference type="NCBIfam" id="TIGR00337">
    <property type="entry name" value="PyrG"/>
    <property type="match status" value="1"/>
</dbReference>
<dbReference type="PANTHER" id="PTHR11550">
    <property type="entry name" value="CTP SYNTHASE"/>
    <property type="match status" value="1"/>
</dbReference>
<dbReference type="PANTHER" id="PTHR11550:SF0">
    <property type="entry name" value="CTP SYNTHASE-RELATED"/>
    <property type="match status" value="1"/>
</dbReference>
<dbReference type="Pfam" id="PF06418">
    <property type="entry name" value="CTP_synth_N"/>
    <property type="match status" value="1"/>
</dbReference>
<dbReference type="Pfam" id="PF00117">
    <property type="entry name" value="GATase"/>
    <property type="match status" value="1"/>
</dbReference>
<dbReference type="SUPFAM" id="SSF52317">
    <property type="entry name" value="Class I glutamine amidotransferase-like"/>
    <property type="match status" value="1"/>
</dbReference>
<dbReference type="SUPFAM" id="SSF52540">
    <property type="entry name" value="P-loop containing nucleoside triphosphate hydrolases"/>
    <property type="match status" value="1"/>
</dbReference>
<dbReference type="PROSITE" id="PS51273">
    <property type="entry name" value="GATASE_TYPE_1"/>
    <property type="match status" value="1"/>
</dbReference>
<proteinExistence type="evidence at protein level"/>